<organism>
    <name type="scientific">Rhodopirellula baltica (strain DSM 10527 / NCIMB 13988 / SH1)</name>
    <dbReference type="NCBI Taxonomy" id="243090"/>
    <lineage>
        <taxon>Bacteria</taxon>
        <taxon>Pseudomonadati</taxon>
        <taxon>Planctomycetota</taxon>
        <taxon>Planctomycetia</taxon>
        <taxon>Pirellulales</taxon>
        <taxon>Pirellulaceae</taxon>
        <taxon>Rhodopirellula</taxon>
    </lineage>
</organism>
<accession>Q7USI0</accession>
<comment type="function">
    <text evidence="1">ATP-dependent carboxylate-amine ligase which exhibits weak glutamate--cysteine ligase activity.</text>
</comment>
<comment type="catalytic activity">
    <reaction evidence="1">
        <text>L-cysteine + L-glutamate + ATP = gamma-L-glutamyl-L-cysteine + ADP + phosphate + H(+)</text>
        <dbReference type="Rhea" id="RHEA:13285"/>
        <dbReference type="ChEBI" id="CHEBI:15378"/>
        <dbReference type="ChEBI" id="CHEBI:29985"/>
        <dbReference type="ChEBI" id="CHEBI:30616"/>
        <dbReference type="ChEBI" id="CHEBI:35235"/>
        <dbReference type="ChEBI" id="CHEBI:43474"/>
        <dbReference type="ChEBI" id="CHEBI:58173"/>
        <dbReference type="ChEBI" id="CHEBI:456216"/>
        <dbReference type="EC" id="6.3.2.2"/>
    </reaction>
</comment>
<comment type="similarity">
    <text evidence="1">Belongs to the glutamate--cysteine ligase type 2 family. YbdK subfamily.</text>
</comment>
<sequence>MSFQVPTVGVEEEYQLVDPRSGALIPNCKEVMRTIRRNGGSEEAHSEIQHELHLNQIEMASDVCSSLEEVRDALTQTRRMLIDAARSNETELASAGTNPLPIPTDDALTPKDRYQAMTDRYQQIARDLFIFGCHVHVAMEDRELGIQVMNRCRRWLPILQAITANSPYWDGVDTGYASYRRELWAQWPMAGPPAHFDSLADYQSCVDDLVACGAIKDESFLYWDIRLPTRVPTIEFRAADVMTRVEETVGYVGMIRAIVMLAISEEEQGKPIVPIRPSVLSYAIWHAARYGMNEQLVDPESREMIPASELLNRLMTAIDPALKATGEARPVEAFANQLIKSGTGADRQRRGGELSSVVANVVAETVPSAILA</sequence>
<gene>
    <name type="ordered locus">RB4485</name>
</gene>
<feature type="chain" id="PRO_0000218214" description="Putative glutamate--cysteine ligase 2">
    <location>
        <begin position="1"/>
        <end position="372"/>
    </location>
</feature>
<evidence type="ECO:0000255" key="1">
    <source>
        <dbReference type="HAMAP-Rule" id="MF_01609"/>
    </source>
</evidence>
<name>GCS2_RHOBA</name>
<keyword id="KW-0067">ATP-binding</keyword>
<keyword id="KW-0436">Ligase</keyword>
<keyword id="KW-0547">Nucleotide-binding</keyword>
<keyword id="KW-1185">Reference proteome</keyword>
<proteinExistence type="inferred from homology"/>
<dbReference type="EC" id="6.3.2.2" evidence="1"/>
<dbReference type="EMBL" id="BX294140">
    <property type="protein sequence ID" value="CAD73816.1"/>
    <property type="molecule type" value="Genomic_DNA"/>
</dbReference>
<dbReference type="RefSeq" id="NP_866130.1">
    <property type="nucleotide sequence ID" value="NC_005027.1"/>
</dbReference>
<dbReference type="RefSeq" id="WP_011119935.1">
    <property type="nucleotide sequence ID" value="NC_005027.1"/>
</dbReference>
<dbReference type="SMR" id="Q7USI0"/>
<dbReference type="FunCoup" id="Q7USI0">
    <property type="interactions" value="44"/>
</dbReference>
<dbReference type="STRING" id="243090.RB4485"/>
<dbReference type="EnsemblBacteria" id="CAD73816">
    <property type="protein sequence ID" value="CAD73816"/>
    <property type="gene ID" value="RB4485"/>
</dbReference>
<dbReference type="KEGG" id="rba:RB4485"/>
<dbReference type="PATRIC" id="fig|243090.15.peg.2093"/>
<dbReference type="eggNOG" id="COG2170">
    <property type="taxonomic scope" value="Bacteria"/>
</dbReference>
<dbReference type="HOGENOM" id="CLU_044848_1_0_0"/>
<dbReference type="InParanoid" id="Q7USI0"/>
<dbReference type="OrthoDB" id="9769628at2"/>
<dbReference type="Proteomes" id="UP000001025">
    <property type="component" value="Chromosome"/>
</dbReference>
<dbReference type="GO" id="GO:0005524">
    <property type="term" value="F:ATP binding"/>
    <property type="evidence" value="ECO:0007669"/>
    <property type="project" value="UniProtKB-KW"/>
</dbReference>
<dbReference type="GO" id="GO:0004357">
    <property type="term" value="F:glutamate-cysteine ligase activity"/>
    <property type="evidence" value="ECO:0007669"/>
    <property type="project" value="UniProtKB-EC"/>
</dbReference>
<dbReference type="GO" id="GO:0016879">
    <property type="term" value="F:ligase activity, forming carbon-nitrogen bonds"/>
    <property type="evidence" value="ECO:0000318"/>
    <property type="project" value="GO_Central"/>
</dbReference>
<dbReference type="GO" id="GO:0042398">
    <property type="term" value="P:modified amino acid biosynthetic process"/>
    <property type="evidence" value="ECO:0007669"/>
    <property type="project" value="InterPro"/>
</dbReference>
<dbReference type="FunFam" id="3.30.590.20:FF:000015">
    <property type="entry name" value="Putative glutamate--cysteine ligase 2"/>
    <property type="match status" value="1"/>
</dbReference>
<dbReference type="Gene3D" id="3.30.590.20">
    <property type="match status" value="1"/>
</dbReference>
<dbReference type="HAMAP" id="MF_01609">
    <property type="entry name" value="Glu_cys_ligase_2"/>
    <property type="match status" value="1"/>
</dbReference>
<dbReference type="InterPro" id="IPR050141">
    <property type="entry name" value="GCL_type2/YbdK_subfam"/>
</dbReference>
<dbReference type="InterPro" id="IPR006336">
    <property type="entry name" value="GCS2"/>
</dbReference>
<dbReference type="InterPro" id="IPR014746">
    <property type="entry name" value="Gln_synth/guanido_kin_cat_dom"/>
</dbReference>
<dbReference type="InterPro" id="IPR011793">
    <property type="entry name" value="YbdK"/>
</dbReference>
<dbReference type="NCBIfam" id="TIGR02050">
    <property type="entry name" value="gshA_cyan_rel"/>
    <property type="match status" value="1"/>
</dbReference>
<dbReference type="NCBIfam" id="NF010041">
    <property type="entry name" value="PRK13517.1-1"/>
    <property type="match status" value="1"/>
</dbReference>
<dbReference type="PANTHER" id="PTHR36510">
    <property type="entry name" value="GLUTAMATE--CYSTEINE LIGASE 2-RELATED"/>
    <property type="match status" value="1"/>
</dbReference>
<dbReference type="PANTHER" id="PTHR36510:SF1">
    <property type="entry name" value="GLUTAMATE--CYSTEINE LIGASE 2-RELATED"/>
    <property type="match status" value="1"/>
</dbReference>
<dbReference type="Pfam" id="PF04107">
    <property type="entry name" value="GCS2"/>
    <property type="match status" value="1"/>
</dbReference>
<dbReference type="SUPFAM" id="SSF55931">
    <property type="entry name" value="Glutamine synthetase/guanido kinase"/>
    <property type="match status" value="1"/>
</dbReference>
<protein>
    <recommendedName>
        <fullName evidence="1">Putative glutamate--cysteine ligase 2</fullName>
        <ecNumber evidence="1">6.3.2.2</ecNumber>
    </recommendedName>
    <alternativeName>
        <fullName evidence="1">Gamma-glutamylcysteine synthetase 2</fullName>
        <shortName evidence="1">GCS 2</shortName>
        <shortName evidence="1">Gamma-GCS 2</shortName>
    </alternativeName>
</protein>
<reference key="1">
    <citation type="journal article" date="2003" name="Proc. Natl. Acad. Sci. U.S.A.">
        <title>Complete genome sequence of the marine planctomycete Pirellula sp. strain 1.</title>
        <authorList>
            <person name="Gloeckner F.O."/>
            <person name="Kube M."/>
            <person name="Bauer M."/>
            <person name="Teeling H."/>
            <person name="Lombardot T."/>
            <person name="Ludwig W."/>
            <person name="Gade D."/>
            <person name="Beck A."/>
            <person name="Borzym K."/>
            <person name="Heitmann K."/>
            <person name="Rabus R."/>
            <person name="Schlesner H."/>
            <person name="Amann R."/>
            <person name="Reinhardt R."/>
        </authorList>
    </citation>
    <scope>NUCLEOTIDE SEQUENCE [LARGE SCALE GENOMIC DNA]</scope>
    <source>
        <strain>DSM 10527 / NCIMB 13988 / SH1</strain>
    </source>
</reference>